<feature type="chain" id="PRO_0000322643" description="EH domain-containing protein 2">
    <location>
        <begin position="1"/>
        <end position="543"/>
    </location>
</feature>
<feature type="domain" description="Dynamin-type G" evidence="5">
    <location>
        <begin position="55"/>
        <end position="286"/>
    </location>
</feature>
<feature type="domain" description="EH" evidence="3">
    <location>
        <begin position="449"/>
        <end position="537"/>
    </location>
</feature>
<feature type="domain" description="EF-hand" evidence="4">
    <location>
        <begin position="481"/>
        <end position="516"/>
    </location>
</feature>
<feature type="region of interest" description="G1 motif" evidence="5">
    <location>
        <begin position="65"/>
        <end position="72"/>
    </location>
</feature>
<feature type="region of interest" description="G2 motif" evidence="5">
    <location>
        <begin position="91"/>
        <end position="92"/>
    </location>
</feature>
<feature type="region of interest" description="G3 motif" evidence="5">
    <location>
        <begin position="153"/>
        <end position="156"/>
    </location>
</feature>
<feature type="region of interest" description="G4 motif" evidence="5">
    <location>
        <begin position="219"/>
        <end position="222"/>
    </location>
</feature>
<feature type="region of interest" description="G5 motif" evidence="5">
    <location>
        <position position="243"/>
    </location>
</feature>
<feature type="region of interest" description="Mediates membrane-binding" evidence="11">
    <location>
        <begin position="320"/>
        <end position="340"/>
    </location>
</feature>
<feature type="region of interest" description="Disordered" evidence="6">
    <location>
        <begin position="521"/>
        <end position="543"/>
    </location>
</feature>
<feature type="compositionally biased region" description="Basic residues" evidence="6">
    <location>
        <begin position="534"/>
        <end position="543"/>
    </location>
</feature>
<feature type="binding site" evidence="8 11 14 15">
    <location>
        <begin position="65"/>
        <end position="72"/>
    </location>
    <ligand>
        <name>ATP</name>
        <dbReference type="ChEBI" id="CHEBI:30616"/>
    </ligand>
</feature>
<feature type="binding site" evidence="11 15">
    <location>
        <position position="220"/>
    </location>
    <ligand>
        <name>ATP</name>
        <dbReference type="ChEBI" id="CHEBI:30616"/>
    </ligand>
</feature>
<feature type="binding site" evidence="8 11 14 15">
    <location>
        <position position="258"/>
    </location>
    <ligand>
        <name>ATP</name>
        <dbReference type="ChEBI" id="CHEBI:30616"/>
    </ligand>
</feature>
<feature type="binding site" evidence="4 8 11 14 15">
    <location>
        <position position="494"/>
    </location>
    <ligand>
        <name>Ca(2+)</name>
        <dbReference type="ChEBI" id="CHEBI:29108"/>
    </ligand>
</feature>
<feature type="binding site" evidence="4 8 11 14 15">
    <location>
        <position position="496"/>
    </location>
    <ligand>
        <name>Ca(2+)</name>
        <dbReference type="ChEBI" id="CHEBI:29108"/>
    </ligand>
</feature>
<feature type="binding site" evidence="4 8 11 14 15">
    <location>
        <position position="498"/>
    </location>
    <ligand>
        <name>Ca(2+)</name>
        <dbReference type="ChEBI" id="CHEBI:29108"/>
    </ligand>
</feature>
<feature type="binding site" evidence="4 8 11 14 15">
    <location>
        <position position="500"/>
    </location>
    <ligand>
        <name>Ca(2+)</name>
        <dbReference type="ChEBI" id="CHEBI:29108"/>
    </ligand>
</feature>
<feature type="binding site" evidence="4 8 11 14 15">
    <location>
        <position position="505"/>
    </location>
    <ligand>
        <name>Ca(2+)</name>
        <dbReference type="ChEBI" id="CHEBI:29108"/>
    </ligand>
</feature>
<feature type="modified residue" description="Phosphoserine" evidence="1">
    <location>
        <position position="3"/>
    </location>
</feature>
<feature type="modified residue" description="Phosphoserine" evidence="18">
    <location>
        <position position="44"/>
    </location>
</feature>
<feature type="modified residue" description="Phosphoserine" evidence="16 17 18">
    <location>
        <position position="438"/>
    </location>
</feature>
<feature type="modified residue" description="Phosphoserine" evidence="18">
    <location>
        <position position="468"/>
    </location>
</feature>
<feature type="modified residue" description="Phosphoserine" evidence="2">
    <location>
        <position position="470"/>
    </location>
</feature>
<feature type="modified residue" description="Phosphoserine" evidence="2">
    <location>
        <position position="484"/>
    </location>
</feature>
<feature type="modified residue" description="Phosphoserine" evidence="1">
    <location>
        <position position="493"/>
    </location>
</feature>
<feature type="mutagenesis site" description="Inhibits myoblast fusion." evidence="9">
    <original>G</original>
    <variation>R</variation>
    <location>
        <position position="65"/>
    </location>
</feature>
<feature type="mutagenesis site" description="Abolishes ATP binding." evidence="8">
    <original>T</original>
    <variation>A</variation>
    <location>
        <position position="72"/>
    </location>
</feature>
<feature type="mutagenesis site" description="Abolishes increase of intrinsic ATPase activity upon interaction with membranes." evidence="8">
    <original>T</original>
    <variation>A</variation>
    <location>
        <position position="94"/>
    </location>
</feature>
<feature type="mutagenesis site" description="Increases intrinsic ATPase activity." evidence="8">
    <original>I</original>
    <variation>Q</variation>
    <location>
        <position position="157"/>
    </location>
</feature>
<feature type="mutagenesis site" description="Increases intrinsic ATPase activity." evidence="8">
    <original>R</original>
    <variation>E</variation>
    <location>
        <position position="167"/>
    </location>
</feature>
<feature type="mutagenesis site" description="Abolishes localization at the plasma membrane; reduces increase of intrinsic ATPase activity upon interaction with membranes." evidence="8">
    <original>F</original>
    <variation>A</variation>
    <location>
        <position position="322"/>
    </location>
</feature>
<feature type="mutagenesis site" description="Abolishes localization at the plasma membrane." evidence="8">
    <original>K</original>
    <variation>D</variation>
    <location>
        <position position="324"/>
    </location>
</feature>
<feature type="mutagenesis site" description="Abolishes localization at the plasma membrane; abolishes increase of intrinsic ATPase activity upon interaction with membranes." evidence="8">
    <original>K</original>
    <variation>D</variation>
    <location>
        <position position="327"/>
    </location>
</feature>
<feature type="mutagenesis site" description="Abolishes localization at the plasma membrane; reduces increase of intrinsic ATPase activity upon interaction with membranes." evidence="8">
    <original>K</original>
    <variation>D</variation>
    <location>
        <position position="328"/>
    </location>
</feature>
<feature type="mutagenesis site" description="Abolishes localization at the plasma membrane." evidence="8">
    <original>K</original>
    <variation>D</variation>
    <location>
        <position position="329"/>
    </location>
</feature>
<feature type="sequence conflict" description="In Ref. 2; BAC32789." evidence="12" ref="2">
    <original>R</original>
    <variation>S</variation>
    <location>
        <position position="181"/>
    </location>
</feature>
<feature type="helix" evidence="20">
    <location>
        <begin position="21"/>
        <end position="32"/>
    </location>
</feature>
<feature type="helix" evidence="20">
    <location>
        <begin position="34"/>
        <end position="39"/>
    </location>
</feature>
<feature type="helix" evidence="20">
    <location>
        <begin position="42"/>
        <end position="44"/>
    </location>
</feature>
<feature type="helix" evidence="20">
    <location>
        <begin position="52"/>
        <end position="56"/>
    </location>
</feature>
<feature type="strand" evidence="20">
    <location>
        <begin position="60"/>
        <end position="66"/>
    </location>
</feature>
<feature type="helix" evidence="20">
    <location>
        <begin position="71"/>
        <end position="79"/>
    </location>
</feature>
<feature type="strand" evidence="20">
    <location>
        <begin position="96"/>
        <end position="102"/>
    </location>
</feature>
<feature type="strand" evidence="20">
    <location>
        <begin position="104"/>
        <end position="109"/>
    </location>
</feature>
<feature type="strand" evidence="20">
    <location>
        <begin position="134"/>
        <end position="141"/>
    </location>
</feature>
<feature type="helix" evidence="20">
    <location>
        <begin position="145"/>
        <end position="147"/>
    </location>
</feature>
<feature type="strand" evidence="20">
    <location>
        <begin position="150"/>
        <end position="153"/>
    </location>
</feature>
<feature type="helix" evidence="20">
    <location>
        <begin position="171"/>
        <end position="181"/>
    </location>
</feature>
<feature type="strand" evidence="20">
    <location>
        <begin position="183"/>
        <end position="190"/>
    </location>
</feature>
<feature type="helix" evidence="20">
    <location>
        <begin position="191"/>
        <end position="193"/>
    </location>
</feature>
<feature type="helix" evidence="20">
    <location>
        <begin position="198"/>
        <end position="207"/>
    </location>
</feature>
<feature type="helix" evidence="20">
    <location>
        <begin position="211"/>
        <end position="213"/>
    </location>
</feature>
<feature type="strand" evidence="20">
    <location>
        <begin position="214"/>
        <end position="219"/>
    </location>
</feature>
<feature type="turn" evidence="20">
    <location>
        <begin position="220"/>
        <end position="223"/>
    </location>
</feature>
<feature type="helix" evidence="20">
    <location>
        <begin position="226"/>
        <end position="244"/>
    </location>
</feature>
<feature type="strand" evidence="20">
    <location>
        <begin position="252"/>
        <end position="255"/>
    </location>
</feature>
<feature type="strand" evidence="19">
    <location>
        <begin position="258"/>
        <end position="260"/>
    </location>
</feature>
<feature type="helix" evidence="20">
    <location>
        <begin position="268"/>
        <end position="283"/>
    </location>
</feature>
<feature type="turn" evidence="20">
    <location>
        <begin position="284"/>
        <end position="288"/>
    </location>
</feature>
<feature type="helix" evidence="20">
    <location>
        <begin position="289"/>
        <end position="317"/>
    </location>
</feature>
<feature type="strand" evidence="20">
    <location>
        <begin position="320"/>
        <end position="323"/>
    </location>
</feature>
<feature type="helix" evidence="20">
    <location>
        <begin position="324"/>
        <end position="346"/>
    </location>
</feature>
<feature type="helix" evidence="20">
    <location>
        <begin position="350"/>
        <end position="352"/>
    </location>
</feature>
<feature type="helix" evidence="20">
    <location>
        <begin position="356"/>
        <end position="364"/>
    </location>
</feature>
<feature type="helix" evidence="20">
    <location>
        <begin position="368"/>
        <end position="370"/>
    </location>
</feature>
<feature type="helix" evidence="20">
    <location>
        <begin position="376"/>
        <end position="387"/>
    </location>
</feature>
<feature type="helix" evidence="20">
    <location>
        <begin position="389"/>
        <end position="403"/>
    </location>
</feature>
<feature type="helix" evidence="19">
    <location>
        <begin position="405"/>
        <end position="407"/>
    </location>
</feature>
<feature type="strand" evidence="20">
    <location>
        <begin position="411"/>
        <end position="414"/>
    </location>
</feature>
<feature type="helix" evidence="20">
    <location>
        <begin position="416"/>
        <end position="419"/>
    </location>
</feature>
<feature type="helix" evidence="20">
    <location>
        <begin position="447"/>
        <end position="459"/>
    </location>
</feature>
<feature type="strand" evidence="20">
    <location>
        <begin position="466"/>
        <end position="468"/>
    </location>
</feature>
<feature type="helix" evidence="20">
    <location>
        <begin position="469"/>
        <end position="476"/>
    </location>
</feature>
<feature type="helix" evidence="20">
    <location>
        <begin position="477"/>
        <end position="479"/>
    </location>
</feature>
<feature type="helix" evidence="20">
    <location>
        <begin position="483"/>
        <end position="493"/>
    </location>
</feature>
<feature type="strand" evidence="20">
    <location>
        <begin position="498"/>
        <end position="502"/>
    </location>
</feature>
<feature type="helix" evidence="20">
    <location>
        <begin position="503"/>
        <end position="518"/>
    </location>
</feature>
<feature type="helix" evidence="20">
    <location>
        <begin position="528"/>
        <end position="530"/>
    </location>
</feature>
<feature type="helix" evidence="20">
    <location>
        <begin position="533"/>
        <end position="535"/>
    </location>
</feature>
<sequence>MFSWLKKGGARGQRPEAIRTVTSSLKELYRTKLLPLEEHYRFGSFHSPALEDADFDGKPMVLVAGQYSTGKTSFIQYLLEQEVPGSRVGPEPTTDCFVAVMHGETEGTVPGNALVVDPEKPFRKLNPFGNTFLNRFMCAQLPNQVLESISIIDTPGILSGAKQRVSRGYDFPAVLRWFAERVDLIILLFDAHKLEISDEFSEAIGALRGHEDKIRVVLNKADMVETQQLMRVYGALMWALGKVVGTPEVLRVYIGSFWSQPLLVPDNRRLFELEEQDLFRDIQGLPRHAALRKLNDLVKRARLVRVHAYIISYLKKEMPTVFGKENKKKQLILKLPVIFAKIQLEHHISPGDFPDCQKMQELLMAHDFTKFHSLKPKLLEALDDMLAQDIAKLMPLLRQEELESVEAGVQGGAFEGTRMGPFVERGPDEAIEDGEEGSEDDAEWVVTKDKSKYDEIFYNLAPADGKLSGSKAKTWMVGTKLPNSVLGRIWKLSDVDRDGMLDDEEFALASHLIEAKLEGHGLPTNLPRRLVPPSKRRQKGSAE</sequence>
<comment type="function">
    <text evidence="2 7 9 10 11">ATP- and membrane-binding protein that controls membrane reorganization/tubulation upon ATP hydrolysis (PubMed:24508342). Plays a role in membrane trafficking between the plasma membrane and endosomes. Important for the internalization of GLUT4 (PubMed:14676205). Required for fusion of myoblasts to skeletal muscle myotubes. Required for normal translocation of FER1L5 to the plasma membrane (PubMed:18502764, PubMed:21177873). Regulates the equilibrium between cell surface-associated and cell surface-dissociated caveolae by constraining caveolae at the cell membrane (By similarity).</text>
</comment>
<comment type="activity regulation">
    <text evidence="8">The very low intrinsic ATPase activity is increased upon interaction with liposomes.</text>
</comment>
<comment type="subunit">
    <text evidence="2 7 8 9 10">Homodimer and homooligomer (By similarity). Interacts with EHD1 (By similarity). May also interact with EHD3 and EHD4 (By similarity). Interacts with MYOF (PubMed:18502764, PubMed:21177873). Interacts with EHBP1 (PubMed:14676205). Interacts with FER1L5 (via second C2 domain) (PubMed:21177873). Interacts with CAV1 in a cholesterol-dependent manner (By similarity). Interacts (via EH domain) with PACSIN2 (via NPF motifs); this interaction probably stabilizes the caveolae (By similarity).</text>
</comment>
<comment type="interaction">
    <interactant intactId="EBI-1994334">
        <id>Q8BH64</id>
    </interactant>
    <interactant intactId="EBI-1994334">
        <id>Q8BH64</id>
        <label>Ehd2</label>
    </interactant>
    <organismsDiffer>false</organismsDiffer>
    <experiments>6</experiments>
</comment>
<comment type="subcellular location">
    <subcellularLocation>
        <location evidence="7">Cell membrane</location>
        <topology evidence="7">Peripheral membrane protein</topology>
        <orientation evidence="7">Cytoplasmic side</orientation>
    </subcellularLocation>
    <subcellularLocation>
        <location evidence="11">Membrane</location>
        <location evidence="11">Caveola</location>
        <topology evidence="11">Peripheral membrane protein</topology>
        <orientation evidence="11">Cytoplasmic side</orientation>
    </subcellularLocation>
    <subcellularLocation>
        <location evidence="1">Endosome membrane</location>
        <topology evidence="1">Peripheral membrane protein</topology>
        <orientation evidence="1">Cytoplasmic side</orientation>
    </subcellularLocation>
    <subcellularLocation>
        <location evidence="7">Cytoplasm</location>
        <location evidence="7">Cytosol</location>
    </subcellularLocation>
    <text evidence="7 9">Colocalizes with GLUT4 in intracellular tubulovesicular structures that are associated with cortical F-actin (PubMed:14676205). Colocalizes with FER1L5 at plasma membrane in myoblasts and myotubes (PubMed:18502764).</text>
</comment>
<comment type="tissue specificity">
    <text evidence="7">Detected in lung and adipocytes. Detected at lower levels in heart and skeletal muscle.</text>
</comment>
<comment type="domain">
    <text evidence="7">The EH domain interacts with Asn-Pro-Phe (NPF) motifs of target proteins.</text>
</comment>
<comment type="similarity">
    <text evidence="5">Belongs to the TRAFAC class dynamin-like GTPase superfamily. Dynamin/Fzo/YdjA family. EHD subfamily.</text>
</comment>
<dbReference type="EMBL" id="AY531389">
    <property type="protein sequence ID" value="AAS48536.1"/>
    <property type="molecule type" value="mRNA"/>
</dbReference>
<dbReference type="EMBL" id="AK031203">
    <property type="protein sequence ID" value="BAC27298.1"/>
    <property type="molecule type" value="mRNA"/>
</dbReference>
<dbReference type="EMBL" id="AK046566">
    <property type="protein sequence ID" value="BAC32789.1"/>
    <property type="molecule type" value="mRNA"/>
</dbReference>
<dbReference type="EMBL" id="AK048356">
    <property type="protein sequence ID" value="BAC33310.1"/>
    <property type="molecule type" value="mRNA"/>
</dbReference>
<dbReference type="EMBL" id="AK050243">
    <property type="protein sequence ID" value="BAC34142.1"/>
    <property type="molecule type" value="mRNA"/>
</dbReference>
<dbReference type="EMBL" id="AK084455">
    <property type="protein sequence ID" value="BAC39188.1"/>
    <property type="molecule type" value="mRNA"/>
</dbReference>
<dbReference type="EMBL" id="AK085016">
    <property type="protein sequence ID" value="BAC39339.1"/>
    <property type="molecule type" value="mRNA"/>
</dbReference>
<dbReference type="EMBL" id="BC113161">
    <property type="protein sequence ID" value="AAI13162.1"/>
    <property type="molecule type" value="mRNA"/>
</dbReference>
<dbReference type="CCDS" id="CCDS20842.1"/>
<dbReference type="RefSeq" id="NP_001406242.1">
    <property type="nucleotide sequence ID" value="NM_001419313.1"/>
</dbReference>
<dbReference type="RefSeq" id="NP_694708.2">
    <property type="nucleotide sequence ID" value="NM_153068.4"/>
</dbReference>
<dbReference type="RefSeq" id="XP_011248884.1">
    <property type="nucleotide sequence ID" value="XM_011250582.2"/>
</dbReference>
<dbReference type="PDB" id="2QPT">
    <property type="method" value="X-ray"/>
    <property type="resolution" value="3.10 A"/>
    <property type="chains" value="A=1-543"/>
</dbReference>
<dbReference type="PDB" id="4CID">
    <property type="method" value="X-ray"/>
    <property type="resolution" value="3.00 A"/>
    <property type="chains" value="A=5-543"/>
</dbReference>
<dbReference type="PDBsum" id="2QPT"/>
<dbReference type="PDBsum" id="4CID"/>
<dbReference type="SMR" id="Q8BH64"/>
<dbReference type="BioGRID" id="234420">
    <property type="interactions" value="5"/>
</dbReference>
<dbReference type="CORUM" id="Q8BH64"/>
<dbReference type="DIP" id="DIP-46806N"/>
<dbReference type="ELM" id="Q8BH64"/>
<dbReference type="FunCoup" id="Q8BH64">
    <property type="interactions" value="1471"/>
</dbReference>
<dbReference type="IntAct" id="Q8BH64">
    <property type="interactions" value="7"/>
</dbReference>
<dbReference type="STRING" id="10090.ENSMUSP00000096397"/>
<dbReference type="ChEMBL" id="CHEMBL4879485"/>
<dbReference type="GlyGen" id="Q8BH64">
    <property type="glycosylation" value="1 site, 1 O-linked glycan (1 site)"/>
</dbReference>
<dbReference type="iPTMnet" id="Q8BH64"/>
<dbReference type="PhosphoSitePlus" id="Q8BH64"/>
<dbReference type="SwissPalm" id="Q8BH64"/>
<dbReference type="jPOST" id="Q8BH64"/>
<dbReference type="PaxDb" id="10090-ENSMUSP00000096397"/>
<dbReference type="PeptideAtlas" id="Q8BH64"/>
<dbReference type="ProteomicsDB" id="277566"/>
<dbReference type="Pumba" id="Q8BH64"/>
<dbReference type="Antibodypedia" id="31594">
    <property type="antibodies" value="210 antibodies from 30 providers"/>
</dbReference>
<dbReference type="DNASU" id="259300"/>
<dbReference type="Ensembl" id="ENSMUST00000098799.5">
    <property type="protein sequence ID" value="ENSMUSP00000096397.4"/>
    <property type="gene ID" value="ENSMUSG00000074364.7"/>
</dbReference>
<dbReference type="GeneID" id="259300"/>
<dbReference type="KEGG" id="mmu:259300"/>
<dbReference type="UCSC" id="uc009fgt.1">
    <property type="organism name" value="mouse"/>
</dbReference>
<dbReference type="AGR" id="MGI:2154274"/>
<dbReference type="CTD" id="30846"/>
<dbReference type="MGI" id="MGI:2154274">
    <property type="gene designation" value="Ehd2"/>
</dbReference>
<dbReference type="VEuPathDB" id="HostDB:ENSMUSG00000074364"/>
<dbReference type="eggNOG" id="KOG1954">
    <property type="taxonomic scope" value="Eukaryota"/>
</dbReference>
<dbReference type="GeneTree" id="ENSGT00940000159256"/>
<dbReference type="HOGENOM" id="CLU_017595_1_1_1"/>
<dbReference type="InParanoid" id="Q8BH64"/>
<dbReference type="OMA" id="CAQIPNQ"/>
<dbReference type="OrthoDB" id="1716625at2759"/>
<dbReference type="PhylomeDB" id="Q8BH64"/>
<dbReference type="TreeFam" id="TF314429"/>
<dbReference type="Reactome" id="R-MMU-983231">
    <property type="pathway name" value="Factors involved in megakaryocyte development and platelet production"/>
</dbReference>
<dbReference type="BioGRID-ORCS" id="259300">
    <property type="hits" value="3 hits in 81 CRISPR screens"/>
</dbReference>
<dbReference type="ChiTaRS" id="Ehd2">
    <property type="organism name" value="mouse"/>
</dbReference>
<dbReference type="EvolutionaryTrace" id="Q8BH64"/>
<dbReference type="PRO" id="PR:Q8BH64"/>
<dbReference type="Proteomes" id="UP000000589">
    <property type="component" value="Chromosome 7"/>
</dbReference>
<dbReference type="RNAct" id="Q8BH64">
    <property type="molecule type" value="protein"/>
</dbReference>
<dbReference type="Bgee" id="ENSMUSG00000074364">
    <property type="expression patterns" value="Expressed in ascending aorta and 196 other cell types or tissues"/>
</dbReference>
<dbReference type="ExpressionAtlas" id="Q8BH64">
    <property type="expression patterns" value="baseline and differential"/>
</dbReference>
<dbReference type="GO" id="GO:0005901">
    <property type="term" value="C:caveola"/>
    <property type="evidence" value="ECO:0000314"/>
    <property type="project" value="UniProtKB"/>
</dbReference>
<dbReference type="GO" id="GO:0005829">
    <property type="term" value="C:cytosol"/>
    <property type="evidence" value="ECO:0000314"/>
    <property type="project" value="UniProtKB"/>
</dbReference>
<dbReference type="GO" id="GO:0016020">
    <property type="term" value="C:membrane"/>
    <property type="evidence" value="ECO:0000314"/>
    <property type="project" value="UniProtKB"/>
</dbReference>
<dbReference type="GO" id="GO:0048471">
    <property type="term" value="C:perinuclear region of cytoplasm"/>
    <property type="evidence" value="ECO:0000314"/>
    <property type="project" value="MGI"/>
</dbReference>
<dbReference type="GO" id="GO:0005886">
    <property type="term" value="C:plasma membrane"/>
    <property type="evidence" value="ECO:0000314"/>
    <property type="project" value="UniProtKB"/>
</dbReference>
<dbReference type="GO" id="GO:0055038">
    <property type="term" value="C:recycling endosome membrane"/>
    <property type="evidence" value="ECO:0000250"/>
    <property type="project" value="UniProtKB"/>
</dbReference>
<dbReference type="GO" id="GO:0005524">
    <property type="term" value="F:ATP binding"/>
    <property type="evidence" value="ECO:0007669"/>
    <property type="project" value="UniProtKB-KW"/>
</dbReference>
<dbReference type="GO" id="GO:0005509">
    <property type="term" value="F:calcium ion binding"/>
    <property type="evidence" value="ECO:0007669"/>
    <property type="project" value="InterPro"/>
</dbReference>
<dbReference type="GO" id="GO:0005525">
    <property type="term" value="F:GTP binding"/>
    <property type="evidence" value="ECO:0007669"/>
    <property type="project" value="InterPro"/>
</dbReference>
<dbReference type="GO" id="GO:0016787">
    <property type="term" value="F:hydrolase activity"/>
    <property type="evidence" value="ECO:0007669"/>
    <property type="project" value="UniProtKB-KW"/>
</dbReference>
<dbReference type="GO" id="GO:0042802">
    <property type="term" value="F:identical protein binding"/>
    <property type="evidence" value="ECO:0000353"/>
    <property type="project" value="IntAct"/>
</dbReference>
<dbReference type="GO" id="GO:0019904">
    <property type="term" value="F:protein domain specific binding"/>
    <property type="evidence" value="ECO:0000314"/>
    <property type="project" value="MGI"/>
</dbReference>
<dbReference type="GO" id="GO:0030866">
    <property type="term" value="P:cortical actin cytoskeleton organization"/>
    <property type="evidence" value="ECO:0000314"/>
    <property type="project" value="MGI"/>
</dbReference>
<dbReference type="GO" id="GO:0032456">
    <property type="term" value="P:endocytic recycling"/>
    <property type="evidence" value="ECO:0000250"/>
    <property type="project" value="UniProtKB"/>
</dbReference>
<dbReference type="GO" id="GO:0006897">
    <property type="term" value="P:endocytosis"/>
    <property type="evidence" value="ECO:0000314"/>
    <property type="project" value="MGI"/>
</dbReference>
<dbReference type="GO" id="GO:0097320">
    <property type="term" value="P:plasma membrane tubulation"/>
    <property type="evidence" value="ECO:0000314"/>
    <property type="project" value="UniProtKB"/>
</dbReference>
<dbReference type="GO" id="GO:2001137">
    <property type="term" value="P:positive regulation of endocytic recycling"/>
    <property type="evidence" value="ECO:0000315"/>
    <property type="project" value="UniProtKB"/>
</dbReference>
<dbReference type="GO" id="GO:1901741">
    <property type="term" value="P:positive regulation of myoblast fusion"/>
    <property type="evidence" value="ECO:0000315"/>
    <property type="project" value="UniProtKB"/>
</dbReference>
<dbReference type="GO" id="GO:0072659">
    <property type="term" value="P:protein localization to plasma membrane"/>
    <property type="evidence" value="ECO:0000314"/>
    <property type="project" value="UniProtKB"/>
</dbReference>
<dbReference type="CDD" id="cd00052">
    <property type="entry name" value="EH"/>
    <property type="match status" value="1"/>
</dbReference>
<dbReference type="CDD" id="cd09913">
    <property type="entry name" value="EHD"/>
    <property type="match status" value="1"/>
</dbReference>
<dbReference type="DisProt" id="DP01940"/>
<dbReference type="FunFam" id="3.40.50.300:FF:000147">
    <property type="entry name" value="EH domain-containing protein 1"/>
    <property type="match status" value="1"/>
</dbReference>
<dbReference type="FunFam" id="1.10.238.10:FF:000038">
    <property type="entry name" value="EH domain-containing protein 3"/>
    <property type="match status" value="1"/>
</dbReference>
<dbReference type="Gene3D" id="1.10.268.20">
    <property type="match status" value="1"/>
</dbReference>
<dbReference type="Gene3D" id="1.10.238.10">
    <property type="entry name" value="EF-hand"/>
    <property type="match status" value="1"/>
</dbReference>
<dbReference type="Gene3D" id="3.40.50.300">
    <property type="entry name" value="P-loop containing nucleotide triphosphate hydrolases"/>
    <property type="match status" value="1"/>
</dbReference>
<dbReference type="InterPro" id="IPR040990">
    <property type="entry name" value="DUF5600"/>
</dbReference>
<dbReference type="InterPro" id="IPR045063">
    <property type="entry name" value="Dynamin_N"/>
</dbReference>
<dbReference type="InterPro" id="IPR011992">
    <property type="entry name" value="EF-hand-dom_pair"/>
</dbReference>
<dbReference type="InterPro" id="IPR018247">
    <property type="entry name" value="EF_Hand_1_Ca_BS"/>
</dbReference>
<dbReference type="InterPro" id="IPR002048">
    <property type="entry name" value="EF_hand_dom"/>
</dbReference>
<dbReference type="InterPro" id="IPR000261">
    <property type="entry name" value="EH_dom"/>
</dbReference>
<dbReference type="InterPro" id="IPR031692">
    <property type="entry name" value="EHD_N"/>
</dbReference>
<dbReference type="InterPro" id="IPR030381">
    <property type="entry name" value="G_DYNAMIN_dom"/>
</dbReference>
<dbReference type="InterPro" id="IPR027417">
    <property type="entry name" value="P-loop_NTPase"/>
</dbReference>
<dbReference type="PANTHER" id="PTHR11216">
    <property type="entry name" value="EH DOMAIN"/>
    <property type="match status" value="1"/>
</dbReference>
<dbReference type="Pfam" id="PF18150">
    <property type="entry name" value="DUF5600"/>
    <property type="match status" value="1"/>
</dbReference>
<dbReference type="Pfam" id="PF00350">
    <property type="entry name" value="Dynamin_N"/>
    <property type="match status" value="1"/>
</dbReference>
<dbReference type="Pfam" id="PF12763">
    <property type="entry name" value="EH"/>
    <property type="match status" value="1"/>
</dbReference>
<dbReference type="Pfam" id="PF16880">
    <property type="entry name" value="EHD_N"/>
    <property type="match status" value="1"/>
</dbReference>
<dbReference type="SMART" id="SM00027">
    <property type="entry name" value="EH"/>
    <property type="match status" value="1"/>
</dbReference>
<dbReference type="SUPFAM" id="SSF47473">
    <property type="entry name" value="EF-hand"/>
    <property type="match status" value="1"/>
</dbReference>
<dbReference type="SUPFAM" id="SSF52540">
    <property type="entry name" value="P-loop containing nucleoside triphosphate hydrolases"/>
    <property type="match status" value="1"/>
</dbReference>
<dbReference type="PROSITE" id="PS00018">
    <property type="entry name" value="EF_HAND_1"/>
    <property type="match status" value="1"/>
</dbReference>
<dbReference type="PROSITE" id="PS50222">
    <property type="entry name" value="EF_HAND_2"/>
    <property type="match status" value="1"/>
</dbReference>
<dbReference type="PROSITE" id="PS50031">
    <property type="entry name" value="EH"/>
    <property type="match status" value="1"/>
</dbReference>
<dbReference type="PROSITE" id="PS51718">
    <property type="entry name" value="G_DYNAMIN_2"/>
    <property type="match status" value="1"/>
</dbReference>
<accession>Q8BH64</accession>
<accession>Q8BL28</accession>
<evidence type="ECO:0000250" key="1">
    <source>
        <dbReference type="UniProtKB" id="Q4V8H8"/>
    </source>
</evidence>
<evidence type="ECO:0000250" key="2">
    <source>
        <dbReference type="UniProtKB" id="Q9NZN4"/>
    </source>
</evidence>
<evidence type="ECO:0000255" key="3">
    <source>
        <dbReference type="PROSITE-ProRule" id="PRU00077"/>
    </source>
</evidence>
<evidence type="ECO:0000255" key="4">
    <source>
        <dbReference type="PROSITE-ProRule" id="PRU00448"/>
    </source>
</evidence>
<evidence type="ECO:0000255" key="5">
    <source>
        <dbReference type="PROSITE-ProRule" id="PRU01055"/>
    </source>
</evidence>
<evidence type="ECO:0000256" key="6">
    <source>
        <dbReference type="SAM" id="MobiDB-lite"/>
    </source>
</evidence>
<evidence type="ECO:0000269" key="7">
    <source>
    </source>
</evidence>
<evidence type="ECO:0000269" key="8">
    <source>
    </source>
</evidence>
<evidence type="ECO:0000269" key="9">
    <source>
    </source>
</evidence>
<evidence type="ECO:0000269" key="10">
    <source>
    </source>
</evidence>
<evidence type="ECO:0000269" key="11">
    <source>
    </source>
</evidence>
<evidence type="ECO:0000305" key="12"/>
<evidence type="ECO:0000312" key="13">
    <source>
        <dbReference type="MGI" id="MGI:2154274"/>
    </source>
</evidence>
<evidence type="ECO:0007744" key="14">
    <source>
        <dbReference type="PDB" id="2QPT"/>
    </source>
</evidence>
<evidence type="ECO:0007744" key="15">
    <source>
        <dbReference type="PDB" id="4CID"/>
    </source>
</evidence>
<evidence type="ECO:0007744" key="16">
    <source>
    </source>
</evidence>
<evidence type="ECO:0007744" key="17">
    <source>
    </source>
</evidence>
<evidence type="ECO:0007744" key="18">
    <source>
    </source>
</evidence>
<evidence type="ECO:0007829" key="19">
    <source>
        <dbReference type="PDB" id="2QPT"/>
    </source>
</evidence>
<evidence type="ECO:0007829" key="20">
    <source>
        <dbReference type="PDB" id="4CID"/>
    </source>
</evidence>
<name>EHD2_MOUSE</name>
<keyword id="KW-0002">3D-structure</keyword>
<keyword id="KW-0067">ATP-binding</keyword>
<keyword id="KW-0106">Calcium</keyword>
<keyword id="KW-1003">Cell membrane</keyword>
<keyword id="KW-0963">Cytoplasm</keyword>
<keyword id="KW-0967">Endosome</keyword>
<keyword id="KW-0378">Hydrolase</keyword>
<keyword id="KW-0472">Membrane</keyword>
<keyword id="KW-0479">Metal-binding</keyword>
<keyword id="KW-0547">Nucleotide-binding</keyword>
<keyword id="KW-0597">Phosphoprotein</keyword>
<keyword id="KW-1185">Reference proteome</keyword>
<organism>
    <name type="scientific">Mus musculus</name>
    <name type="common">Mouse</name>
    <dbReference type="NCBI Taxonomy" id="10090"/>
    <lineage>
        <taxon>Eukaryota</taxon>
        <taxon>Metazoa</taxon>
        <taxon>Chordata</taxon>
        <taxon>Craniata</taxon>
        <taxon>Vertebrata</taxon>
        <taxon>Euteleostomi</taxon>
        <taxon>Mammalia</taxon>
        <taxon>Eutheria</taxon>
        <taxon>Euarchontoglires</taxon>
        <taxon>Glires</taxon>
        <taxon>Rodentia</taxon>
        <taxon>Myomorpha</taxon>
        <taxon>Muroidea</taxon>
        <taxon>Muridae</taxon>
        <taxon>Murinae</taxon>
        <taxon>Mus</taxon>
        <taxon>Mus</taxon>
    </lineage>
</organism>
<gene>
    <name evidence="13" type="primary">Ehd2</name>
</gene>
<reference key="1">
    <citation type="journal article" date="2004" name="J. Biol. Chem.">
        <title>EHD2 and the novel EH domain binding protein EHBP1 couple endocytosis to the actin cytoskeleton.</title>
        <authorList>
            <person name="Guilherme A."/>
            <person name="Soriano N.A."/>
            <person name="Bose S."/>
            <person name="Holik J."/>
            <person name="Bose A."/>
            <person name="Pomerleau D.P."/>
            <person name="Furcinitti P."/>
            <person name="Leszyk J."/>
            <person name="Corvera S."/>
            <person name="Czech M.P."/>
        </authorList>
    </citation>
    <scope>NUCLEOTIDE SEQUENCE [MRNA]</scope>
    <scope>FUNCTION</scope>
    <scope>INTERACTION WITH EHBP1</scope>
    <scope>SUBCELLULAR LOCATION</scope>
    <scope>IDENTIFICATION BY MASS SPECTROMETRY</scope>
    <scope>TISSUE SPECIFICITY</scope>
    <scope>DOMAIN</scope>
    <source>
        <strain>C57BL/6J</strain>
    </source>
</reference>
<reference key="2">
    <citation type="journal article" date="2005" name="Science">
        <title>The transcriptional landscape of the mammalian genome.</title>
        <authorList>
            <person name="Carninci P."/>
            <person name="Kasukawa T."/>
            <person name="Katayama S."/>
            <person name="Gough J."/>
            <person name="Frith M.C."/>
            <person name="Maeda N."/>
            <person name="Oyama R."/>
            <person name="Ravasi T."/>
            <person name="Lenhard B."/>
            <person name="Wells C."/>
            <person name="Kodzius R."/>
            <person name="Shimokawa K."/>
            <person name="Bajic V.B."/>
            <person name="Brenner S.E."/>
            <person name="Batalov S."/>
            <person name="Forrest A.R."/>
            <person name="Zavolan M."/>
            <person name="Davis M.J."/>
            <person name="Wilming L.G."/>
            <person name="Aidinis V."/>
            <person name="Allen J.E."/>
            <person name="Ambesi-Impiombato A."/>
            <person name="Apweiler R."/>
            <person name="Aturaliya R.N."/>
            <person name="Bailey T.L."/>
            <person name="Bansal M."/>
            <person name="Baxter L."/>
            <person name="Beisel K.W."/>
            <person name="Bersano T."/>
            <person name="Bono H."/>
            <person name="Chalk A.M."/>
            <person name="Chiu K.P."/>
            <person name="Choudhary V."/>
            <person name="Christoffels A."/>
            <person name="Clutterbuck D.R."/>
            <person name="Crowe M.L."/>
            <person name="Dalla E."/>
            <person name="Dalrymple B.P."/>
            <person name="de Bono B."/>
            <person name="Della Gatta G."/>
            <person name="di Bernardo D."/>
            <person name="Down T."/>
            <person name="Engstrom P."/>
            <person name="Fagiolini M."/>
            <person name="Faulkner G."/>
            <person name="Fletcher C.F."/>
            <person name="Fukushima T."/>
            <person name="Furuno M."/>
            <person name="Futaki S."/>
            <person name="Gariboldi M."/>
            <person name="Georgii-Hemming P."/>
            <person name="Gingeras T.R."/>
            <person name="Gojobori T."/>
            <person name="Green R.E."/>
            <person name="Gustincich S."/>
            <person name="Harbers M."/>
            <person name="Hayashi Y."/>
            <person name="Hensch T.K."/>
            <person name="Hirokawa N."/>
            <person name="Hill D."/>
            <person name="Huminiecki L."/>
            <person name="Iacono M."/>
            <person name="Ikeo K."/>
            <person name="Iwama A."/>
            <person name="Ishikawa T."/>
            <person name="Jakt M."/>
            <person name="Kanapin A."/>
            <person name="Katoh M."/>
            <person name="Kawasawa Y."/>
            <person name="Kelso J."/>
            <person name="Kitamura H."/>
            <person name="Kitano H."/>
            <person name="Kollias G."/>
            <person name="Krishnan S.P."/>
            <person name="Kruger A."/>
            <person name="Kummerfeld S.K."/>
            <person name="Kurochkin I.V."/>
            <person name="Lareau L.F."/>
            <person name="Lazarevic D."/>
            <person name="Lipovich L."/>
            <person name="Liu J."/>
            <person name="Liuni S."/>
            <person name="McWilliam S."/>
            <person name="Madan Babu M."/>
            <person name="Madera M."/>
            <person name="Marchionni L."/>
            <person name="Matsuda H."/>
            <person name="Matsuzawa S."/>
            <person name="Miki H."/>
            <person name="Mignone F."/>
            <person name="Miyake S."/>
            <person name="Morris K."/>
            <person name="Mottagui-Tabar S."/>
            <person name="Mulder N."/>
            <person name="Nakano N."/>
            <person name="Nakauchi H."/>
            <person name="Ng P."/>
            <person name="Nilsson R."/>
            <person name="Nishiguchi S."/>
            <person name="Nishikawa S."/>
            <person name="Nori F."/>
            <person name="Ohara O."/>
            <person name="Okazaki Y."/>
            <person name="Orlando V."/>
            <person name="Pang K.C."/>
            <person name="Pavan W.J."/>
            <person name="Pavesi G."/>
            <person name="Pesole G."/>
            <person name="Petrovsky N."/>
            <person name="Piazza S."/>
            <person name="Reed J."/>
            <person name="Reid J.F."/>
            <person name="Ring B.Z."/>
            <person name="Ringwald M."/>
            <person name="Rost B."/>
            <person name="Ruan Y."/>
            <person name="Salzberg S.L."/>
            <person name="Sandelin A."/>
            <person name="Schneider C."/>
            <person name="Schoenbach C."/>
            <person name="Sekiguchi K."/>
            <person name="Semple C.A."/>
            <person name="Seno S."/>
            <person name="Sessa L."/>
            <person name="Sheng Y."/>
            <person name="Shibata Y."/>
            <person name="Shimada H."/>
            <person name="Shimada K."/>
            <person name="Silva D."/>
            <person name="Sinclair B."/>
            <person name="Sperling S."/>
            <person name="Stupka E."/>
            <person name="Sugiura K."/>
            <person name="Sultana R."/>
            <person name="Takenaka Y."/>
            <person name="Taki K."/>
            <person name="Tammoja K."/>
            <person name="Tan S.L."/>
            <person name="Tang S."/>
            <person name="Taylor M.S."/>
            <person name="Tegner J."/>
            <person name="Teichmann S.A."/>
            <person name="Ueda H.R."/>
            <person name="van Nimwegen E."/>
            <person name="Verardo R."/>
            <person name="Wei C.L."/>
            <person name="Yagi K."/>
            <person name="Yamanishi H."/>
            <person name="Zabarovsky E."/>
            <person name="Zhu S."/>
            <person name="Zimmer A."/>
            <person name="Hide W."/>
            <person name="Bult C."/>
            <person name="Grimmond S.M."/>
            <person name="Teasdale R.D."/>
            <person name="Liu E.T."/>
            <person name="Brusic V."/>
            <person name="Quackenbush J."/>
            <person name="Wahlestedt C."/>
            <person name="Mattick J.S."/>
            <person name="Hume D.A."/>
            <person name="Kai C."/>
            <person name="Sasaki D."/>
            <person name="Tomaru Y."/>
            <person name="Fukuda S."/>
            <person name="Kanamori-Katayama M."/>
            <person name="Suzuki M."/>
            <person name="Aoki J."/>
            <person name="Arakawa T."/>
            <person name="Iida J."/>
            <person name="Imamura K."/>
            <person name="Itoh M."/>
            <person name="Kato T."/>
            <person name="Kawaji H."/>
            <person name="Kawagashira N."/>
            <person name="Kawashima T."/>
            <person name="Kojima M."/>
            <person name="Kondo S."/>
            <person name="Konno H."/>
            <person name="Nakano K."/>
            <person name="Ninomiya N."/>
            <person name="Nishio T."/>
            <person name="Okada M."/>
            <person name="Plessy C."/>
            <person name="Shibata K."/>
            <person name="Shiraki T."/>
            <person name="Suzuki S."/>
            <person name="Tagami M."/>
            <person name="Waki K."/>
            <person name="Watahiki A."/>
            <person name="Okamura-Oho Y."/>
            <person name="Suzuki H."/>
            <person name="Kawai J."/>
            <person name="Hayashizaki Y."/>
        </authorList>
    </citation>
    <scope>NUCLEOTIDE SEQUENCE [LARGE SCALE MRNA]</scope>
    <source>
        <strain>C57BL/6J</strain>
        <tissue>Adipose tissue</tissue>
        <tissue>Embryonic eye</tissue>
        <tissue>Embryonic head</tissue>
        <tissue>Embryonic lung</tissue>
        <tissue>Forelimb</tissue>
        <tissue>Liver</tissue>
    </source>
</reference>
<reference key="3">
    <citation type="journal article" date="2004" name="Genome Res.">
        <title>The status, quality, and expansion of the NIH full-length cDNA project: the Mammalian Gene Collection (MGC).</title>
        <authorList>
            <consortium name="The MGC Project Team"/>
        </authorList>
    </citation>
    <scope>NUCLEOTIDE SEQUENCE [LARGE SCALE MRNA]</scope>
</reference>
<reference key="4">
    <citation type="journal article" date="2004" name="Mol. Cell. Proteomics">
        <title>Phosphoproteomic analysis of the developing mouse brain.</title>
        <authorList>
            <person name="Ballif B.A."/>
            <person name="Villen J."/>
            <person name="Beausoleil S.A."/>
            <person name="Schwartz D."/>
            <person name="Gygi S.P."/>
        </authorList>
    </citation>
    <scope>PHOSPHORYLATION [LARGE SCALE ANALYSIS] AT SER-438</scope>
    <scope>IDENTIFICATION BY MASS SPECTROMETRY [LARGE SCALE ANALYSIS]</scope>
    <source>
        <tissue>Embryonic brain</tissue>
    </source>
</reference>
<reference key="5">
    <citation type="journal article" date="2008" name="J. Biol. Chem.">
        <title>The endocytic recycling protein EHD2 interacts with myoferlin to regulate myoblast fusion.</title>
        <authorList>
            <person name="Doherty K.R."/>
            <person name="Demonbreun A.R."/>
            <person name="Wallace G.Q."/>
            <person name="Cave A."/>
            <person name="Posey A.D."/>
            <person name="Heretis K."/>
            <person name="Pytel P."/>
            <person name="McNally E.M."/>
        </authorList>
    </citation>
    <scope>FUNCTION</scope>
    <scope>INTERACTION WITH MYOF</scope>
    <scope>MUTAGENESIS OF GLY-65</scope>
    <scope>IDENTIFICATION BY MASS SPECTROMETRY</scope>
    <scope>SUBCELLULAR LOCATION</scope>
</reference>
<reference key="6">
    <citation type="journal article" date="2009" name="Mol. Cell. Proteomics">
        <title>Large scale localization of protein phosphorylation by use of electron capture dissociation mass spectrometry.</title>
        <authorList>
            <person name="Sweet S.M."/>
            <person name="Bailey C.M."/>
            <person name="Cunningham D.L."/>
            <person name="Heath J.K."/>
            <person name="Cooper H.J."/>
        </authorList>
    </citation>
    <scope>PHOSPHORYLATION [LARGE SCALE ANALYSIS] AT SER-438</scope>
    <scope>IDENTIFICATION BY MASS SPECTROMETRY [LARGE SCALE ANALYSIS]</scope>
    <source>
        <tissue>Embryonic fibroblast</tissue>
    </source>
</reference>
<reference key="7">
    <citation type="journal article" date="2010" name="Cell">
        <title>A tissue-specific atlas of mouse protein phosphorylation and expression.</title>
        <authorList>
            <person name="Huttlin E.L."/>
            <person name="Jedrychowski M.P."/>
            <person name="Elias J.E."/>
            <person name="Goswami T."/>
            <person name="Rad R."/>
            <person name="Beausoleil S.A."/>
            <person name="Villen J."/>
            <person name="Haas W."/>
            <person name="Sowa M.E."/>
            <person name="Gygi S.P."/>
        </authorList>
    </citation>
    <scope>PHOSPHORYLATION [LARGE SCALE ANALYSIS] AT SER-44; SER-438 AND SER-468</scope>
    <scope>IDENTIFICATION BY MASS SPECTROMETRY [LARGE SCALE ANALYSIS]</scope>
    <source>
        <tissue>Brain</tissue>
        <tissue>Brown adipose tissue</tissue>
        <tissue>Heart</tissue>
        <tissue>Kidney</tissue>
        <tissue>Liver</tissue>
        <tissue>Lung</tissue>
        <tissue>Pancreas</tissue>
        <tissue>Spleen</tissue>
        <tissue>Testis</tissue>
    </source>
</reference>
<reference key="8">
    <citation type="journal article" date="2011" name="J. Biol. Chem.">
        <title>Endocytic recycling proteins EHD1 and EHD2 interact with fer-1-like-5 (Fer1L5) and mediate myoblast fusion.</title>
        <authorList>
            <person name="Posey A.D. Jr."/>
            <person name="Pytel P."/>
            <person name="Gardikiotes K."/>
            <person name="Demonbreun A.R."/>
            <person name="Rainey M."/>
            <person name="George M."/>
            <person name="Band H."/>
            <person name="McNally E.M."/>
        </authorList>
    </citation>
    <scope>FUNCTION</scope>
    <scope>INTERACTION WITH FER1L5 AND MYOF</scope>
</reference>
<reference key="9">
    <citation type="journal article" date="2007" name="Nature">
        <title>Architectural and mechanistic insights into an EHD ATPase involved in membrane remodelling.</title>
        <authorList>
            <person name="Daumke O."/>
            <person name="Lundmark R."/>
            <person name="Vallis Y."/>
            <person name="Martens S."/>
            <person name="Butler P.J.G."/>
            <person name="McMahon H.T."/>
        </authorList>
    </citation>
    <scope>X-RAY CRYSTALLOGRAPHY (3.1 ANGSTROMS) IN COMPLEX WITH ATP ANALOG AND CALCIUM IONS</scope>
    <scope>SUBUNIT</scope>
    <scope>SUBCELLULAR LOCATION</scope>
    <scope>ACTIVITY REGULATION</scope>
    <scope>MUTAGENESIS OF THR-72; THR-94; ILE-157; ARG-167; PHE-322; LYS-324; LYS-327; LYS-328 AND LYS-329</scope>
</reference>
<reference key="10">
    <citation type="journal article" date="2014" name="Structure">
        <title>Structural insights into membrane interaction and caveolar targeting of dynamin-like EHD2.</title>
        <authorList>
            <person name="Shah C."/>
            <person name="Hegde B.G."/>
            <person name="Moren B."/>
            <person name="Behrmann E."/>
            <person name="Mielke T."/>
            <person name="Moenke G."/>
            <person name="Spahn C.M."/>
            <person name="Lundmark R."/>
            <person name="Daumke O."/>
            <person name="Langen R."/>
        </authorList>
    </citation>
    <scope>X-RAY CRYSTALLOGRAPHY (3.00 ANGSTROMS) OF 5-543 IN COMPLEX WITH ATP ANALOG AND CALCIUM IONS</scope>
    <scope>FUNCTION</scope>
    <scope>SUBCELLULAR LOCATION</scope>
    <scope>MEMBRANE-BINDING</scope>
    <scope>REGION</scope>
</reference>
<protein>
    <recommendedName>
        <fullName evidence="12">EH domain-containing protein 2</fullName>
    </recommendedName>
</protein>
<proteinExistence type="evidence at protein level"/>